<keyword id="KW-0963">Cytoplasm</keyword>
<keyword id="KW-0456">Lyase</keyword>
<keyword id="KW-0479">Metal-binding</keyword>
<keyword id="KW-0684">Rhamnose metabolism</keyword>
<keyword id="KW-0862">Zinc</keyword>
<organism>
    <name type="scientific">Escherichia coli (strain SMS-3-5 / SECEC)</name>
    <dbReference type="NCBI Taxonomy" id="439855"/>
    <lineage>
        <taxon>Bacteria</taxon>
        <taxon>Pseudomonadati</taxon>
        <taxon>Pseudomonadota</taxon>
        <taxon>Gammaproteobacteria</taxon>
        <taxon>Enterobacterales</taxon>
        <taxon>Enterobacteriaceae</taxon>
        <taxon>Escherichia</taxon>
    </lineage>
</organism>
<proteinExistence type="inferred from homology"/>
<reference key="1">
    <citation type="journal article" date="2008" name="J. Bacteriol.">
        <title>Insights into the environmental resistance gene pool from the genome sequence of the multidrug-resistant environmental isolate Escherichia coli SMS-3-5.</title>
        <authorList>
            <person name="Fricke W.F."/>
            <person name="Wright M.S."/>
            <person name="Lindell A.H."/>
            <person name="Harkins D.M."/>
            <person name="Baker-Austin C."/>
            <person name="Ravel J."/>
            <person name="Stepanauskas R."/>
        </authorList>
    </citation>
    <scope>NUCLEOTIDE SEQUENCE [LARGE SCALE GENOMIC DNA]</scope>
    <source>
        <strain>SMS-3-5 / SECEC</strain>
    </source>
</reference>
<feature type="chain" id="PRO_1000193723" description="Rhamnulose-1-phosphate aldolase">
    <location>
        <begin position="1"/>
        <end position="274"/>
    </location>
</feature>
<feature type="active site" evidence="1">
    <location>
        <position position="117"/>
    </location>
</feature>
<feature type="binding site" evidence="1">
    <location>
        <position position="141"/>
    </location>
    <ligand>
        <name>Zn(2+)</name>
        <dbReference type="ChEBI" id="CHEBI:29105"/>
    </ligand>
</feature>
<feature type="binding site" evidence="1">
    <location>
        <position position="143"/>
    </location>
    <ligand>
        <name>Zn(2+)</name>
        <dbReference type="ChEBI" id="CHEBI:29105"/>
    </ligand>
</feature>
<feature type="binding site" evidence="1">
    <location>
        <position position="212"/>
    </location>
    <ligand>
        <name>Zn(2+)</name>
        <dbReference type="ChEBI" id="CHEBI:29105"/>
    </ligand>
</feature>
<accession>B1LMU2</accession>
<dbReference type="EC" id="4.1.2.19" evidence="1"/>
<dbReference type="EMBL" id="CP000970">
    <property type="protein sequence ID" value="ACB15531.1"/>
    <property type="molecule type" value="Genomic_DNA"/>
</dbReference>
<dbReference type="RefSeq" id="WP_001179733.1">
    <property type="nucleotide sequence ID" value="NC_010498.1"/>
</dbReference>
<dbReference type="SMR" id="B1LMU2"/>
<dbReference type="KEGG" id="ecm:EcSMS35_4293"/>
<dbReference type="HOGENOM" id="CLU_076831_0_0_6"/>
<dbReference type="UniPathway" id="UPA00541">
    <property type="reaction ID" value="UER00603"/>
</dbReference>
<dbReference type="Proteomes" id="UP000007011">
    <property type="component" value="Chromosome"/>
</dbReference>
<dbReference type="GO" id="GO:0005829">
    <property type="term" value="C:cytosol"/>
    <property type="evidence" value="ECO:0007669"/>
    <property type="project" value="TreeGrafter"/>
</dbReference>
<dbReference type="GO" id="GO:0046872">
    <property type="term" value="F:metal ion binding"/>
    <property type="evidence" value="ECO:0007669"/>
    <property type="project" value="UniProtKB-KW"/>
</dbReference>
<dbReference type="GO" id="GO:0008994">
    <property type="term" value="F:rhamnulose-1-phosphate aldolase activity"/>
    <property type="evidence" value="ECO:0007669"/>
    <property type="project" value="UniProtKB-UniRule"/>
</dbReference>
<dbReference type="GO" id="GO:0019323">
    <property type="term" value="P:pentose catabolic process"/>
    <property type="evidence" value="ECO:0007669"/>
    <property type="project" value="TreeGrafter"/>
</dbReference>
<dbReference type="GO" id="GO:0019301">
    <property type="term" value="P:rhamnose catabolic process"/>
    <property type="evidence" value="ECO:0007669"/>
    <property type="project" value="UniProtKB-UniRule"/>
</dbReference>
<dbReference type="CDD" id="cd00398">
    <property type="entry name" value="Aldolase_II"/>
    <property type="match status" value="1"/>
</dbReference>
<dbReference type="FunFam" id="3.40.225.10:FF:000006">
    <property type="entry name" value="Rhamnulose-1-phosphate aldolase"/>
    <property type="match status" value="1"/>
</dbReference>
<dbReference type="Gene3D" id="3.40.225.10">
    <property type="entry name" value="Class II aldolase/adducin N-terminal domain"/>
    <property type="match status" value="1"/>
</dbReference>
<dbReference type="HAMAP" id="MF_00770">
    <property type="entry name" value="RhaD"/>
    <property type="match status" value="1"/>
</dbReference>
<dbReference type="InterPro" id="IPR050197">
    <property type="entry name" value="Aldolase_class_II_sugar_metab"/>
</dbReference>
<dbReference type="InterPro" id="IPR001303">
    <property type="entry name" value="Aldolase_II/adducin_N"/>
</dbReference>
<dbReference type="InterPro" id="IPR036409">
    <property type="entry name" value="Aldolase_II/adducin_N_sf"/>
</dbReference>
<dbReference type="InterPro" id="IPR013447">
    <property type="entry name" value="Rhamnulose-1-P_Aldolase"/>
</dbReference>
<dbReference type="NCBIfam" id="NF002963">
    <property type="entry name" value="PRK03634.1"/>
    <property type="match status" value="1"/>
</dbReference>
<dbReference type="NCBIfam" id="TIGR02624">
    <property type="entry name" value="rhamnu_1P_ald"/>
    <property type="match status" value="1"/>
</dbReference>
<dbReference type="PANTHER" id="PTHR22789">
    <property type="entry name" value="FUCULOSE PHOSPHATE ALDOLASE"/>
    <property type="match status" value="1"/>
</dbReference>
<dbReference type="PANTHER" id="PTHR22789:SF16">
    <property type="entry name" value="RHAMNULOSE-1-PHOSPHATE ALDOLASE"/>
    <property type="match status" value="1"/>
</dbReference>
<dbReference type="Pfam" id="PF00596">
    <property type="entry name" value="Aldolase_II"/>
    <property type="match status" value="1"/>
</dbReference>
<dbReference type="SMART" id="SM01007">
    <property type="entry name" value="Aldolase_II"/>
    <property type="match status" value="1"/>
</dbReference>
<dbReference type="SUPFAM" id="SSF53639">
    <property type="entry name" value="AraD/HMP-PK domain-like"/>
    <property type="match status" value="1"/>
</dbReference>
<evidence type="ECO:0000255" key="1">
    <source>
        <dbReference type="HAMAP-Rule" id="MF_00770"/>
    </source>
</evidence>
<comment type="function">
    <text evidence="1">Catalyzes the reversible cleavage of L-rhamnulose-1-phosphate to dihydroxyacetone phosphate (DHAP) and L-lactaldehyde.</text>
</comment>
<comment type="catalytic activity">
    <reaction evidence="1">
        <text>L-rhamnulose 1-phosphate = (S)-lactaldehyde + dihydroxyacetone phosphate</text>
        <dbReference type="Rhea" id="RHEA:19689"/>
        <dbReference type="ChEBI" id="CHEBI:18041"/>
        <dbReference type="ChEBI" id="CHEBI:57642"/>
        <dbReference type="ChEBI" id="CHEBI:58313"/>
        <dbReference type="EC" id="4.1.2.19"/>
    </reaction>
</comment>
<comment type="cofactor">
    <cofactor evidence="1">
        <name>Zn(2+)</name>
        <dbReference type="ChEBI" id="CHEBI:29105"/>
    </cofactor>
    <text evidence="1">Binds 1 zinc ion per subunit.</text>
</comment>
<comment type="pathway">
    <text evidence="1">Carbohydrate degradation; L-rhamnose degradation; glycerone phosphate from L-rhamnose: step 3/3.</text>
</comment>
<comment type="subunit">
    <text evidence="1">Homotetramer.</text>
</comment>
<comment type="subcellular location">
    <subcellularLocation>
        <location evidence="1">Cytoplasm</location>
    </subcellularLocation>
</comment>
<comment type="similarity">
    <text evidence="1">Belongs to the aldolase class II family. RhaD subfamily.</text>
</comment>
<gene>
    <name evidence="1" type="primary">rhaD</name>
    <name type="ordered locus">EcSMS35_4293</name>
</gene>
<name>RHAD_ECOSM</name>
<protein>
    <recommendedName>
        <fullName evidence="1">Rhamnulose-1-phosphate aldolase</fullName>
        <ecNumber evidence="1">4.1.2.19</ecNumber>
    </recommendedName>
</protein>
<sequence>MQNITQSWFVQGMIKATTDAWLKGWDERNGGNLTLRLDDADIAPYHDNFHAQPRYIPLSQPMPLLANTPFIVTGSGKFFRNVQLDPAANLGVVKVDSDGAGYHILWGLTNEAVPTSELPAHFLSHCERIKATNGKDRVIMHCHATNLIALTYVLENDTAVFTRQLWEGSTECLVVFPDGVGILPWMVPGTDEIGQATAQEMQKHSLVLWPFHGVFGSGPTLDETFGLIDTAEKSAQVLVKVYSMGGMKQTISREELIALGQRFGVTPLASALAL</sequence>